<sequence>MAKKSKIAKFQKQQKLVEQYAELRRELKEKGDYEALRKLPKDSNPNRLKNRDLIDGRPHAYMRKFGMSRINFRNLAYKGQIPGIKKASW</sequence>
<comment type="function">
    <text evidence="1">Binds 16S rRNA, required for the assembly of 30S particles and may also be responsible for determining the conformation of the 16S rRNA at the A site.</text>
</comment>
<comment type="subunit">
    <text evidence="1">Part of the 30S ribosomal subunit. Contacts proteins S3 and S10.</text>
</comment>
<comment type="similarity">
    <text evidence="1">Belongs to the universal ribosomal protein uS14 family.</text>
</comment>
<evidence type="ECO:0000255" key="1">
    <source>
        <dbReference type="HAMAP-Rule" id="MF_00537"/>
    </source>
</evidence>
<evidence type="ECO:0000305" key="2"/>
<protein>
    <recommendedName>
        <fullName evidence="1">Small ribosomal subunit protein uS14A</fullName>
    </recommendedName>
    <alternativeName>
        <fullName evidence="2">30S ribosomal protein S14</fullName>
    </alternativeName>
</protein>
<name>RS14_STRA1</name>
<feature type="chain" id="PRO_0000269067" description="Small ribosomal subunit protein uS14A">
    <location>
        <begin position="1"/>
        <end position="89"/>
    </location>
</feature>
<keyword id="KW-0687">Ribonucleoprotein</keyword>
<keyword id="KW-0689">Ribosomal protein</keyword>
<keyword id="KW-0694">RNA-binding</keyword>
<keyword id="KW-0699">rRNA-binding</keyword>
<dbReference type="EMBL" id="CP000114">
    <property type="protein sequence ID" value="ABA45211.1"/>
    <property type="molecule type" value="Genomic_DNA"/>
</dbReference>
<dbReference type="RefSeq" id="WP_001085659.1">
    <property type="nucleotide sequence ID" value="NC_007432.1"/>
</dbReference>
<dbReference type="SMR" id="Q3JZC9"/>
<dbReference type="GeneID" id="66886593"/>
<dbReference type="KEGG" id="sak:SAK_1777"/>
<dbReference type="HOGENOM" id="CLU_139869_0_0_9"/>
<dbReference type="GO" id="GO:0005737">
    <property type="term" value="C:cytoplasm"/>
    <property type="evidence" value="ECO:0007669"/>
    <property type="project" value="UniProtKB-ARBA"/>
</dbReference>
<dbReference type="GO" id="GO:0015935">
    <property type="term" value="C:small ribosomal subunit"/>
    <property type="evidence" value="ECO:0007669"/>
    <property type="project" value="TreeGrafter"/>
</dbReference>
<dbReference type="GO" id="GO:0019843">
    <property type="term" value="F:rRNA binding"/>
    <property type="evidence" value="ECO:0007669"/>
    <property type="project" value="UniProtKB-UniRule"/>
</dbReference>
<dbReference type="GO" id="GO:0003735">
    <property type="term" value="F:structural constituent of ribosome"/>
    <property type="evidence" value="ECO:0007669"/>
    <property type="project" value="InterPro"/>
</dbReference>
<dbReference type="GO" id="GO:0006412">
    <property type="term" value="P:translation"/>
    <property type="evidence" value="ECO:0007669"/>
    <property type="project" value="UniProtKB-UniRule"/>
</dbReference>
<dbReference type="Gene3D" id="4.10.830.10">
    <property type="entry name" value="30s Ribosomal Protein S14, Chain N"/>
    <property type="match status" value="1"/>
</dbReference>
<dbReference type="HAMAP" id="MF_00537">
    <property type="entry name" value="Ribosomal_uS14_1"/>
    <property type="match status" value="1"/>
</dbReference>
<dbReference type="InterPro" id="IPR001209">
    <property type="entry name" value="Ribosomal_uS14"/>
</dbReference>
<dbReference type="InterPro" id="IPR023036">
    <property type="entry name" value="Ribosomal_uS14_bac/plastid"/>
</dbReference>
<dbReference type="InterPro" id="IPR043140">
    <property type="entry name" value="Ribosomal_uS14_sf"/>
</dbReference>
<dbReference type="NCBIfam" id="NF006477">
    <property type="entry name" value="PRK08881.1"/>
    <property type="match status" value="1"/>
</dbReference>
<dbReference type="PANTHER" id="PTHR19836">
    <property type="entry name" value="30S RIBOSOMAL PROTEIN S14"/>
    <property type="match status" value="1"/>
</dbReference>
<dbReference type="PANTHER" id="PTHR19836:SF19">
    <property type="entry name" value="SMALL RIBOSOMAL SUBUNIT PROTEIN US14M"/>
    <property type="match status" value="1"/>
</dbReference>
<dbReference type="Pfam" id="PF00253">
    <property type="entry name" value="Ribosomal_S14"/>
    <property type="match status" value="1"/>
</dbReference>
<dbReference type="SUPFAM" id="SSF57716">
    <property type="entry name" value="Glucocorticoid receptor-like (DNA-binding domain)"/>
    <property type="match status" value="1"/>
</dbReference>
<organism>
    <name type="scientific">Streptococcus agalactiae serotype Ia (strain ATCC 27591 / A909 / CDC SS700)</name>
    <dbReference type="NCBI Taxonomy" id="205921"/>
    <lineage>
        <taxon>Bacteria</taxon>
        <taxon>Bacillati</taxon>
        <taxon>Bacillota</taxon>
        <taxon>Bacilli</taxon>
        <taxon>Lactobacillales</taxon>
        <taxon>Streptococcaceae</taxon>
        <taxon>Streptococcus</taxon>
    </lineage>
</organism>
<proteinExistence type="inferred from homology"/>
<reference key="1">
    <citation type="journal article" date="2005" name="Proc. Natl. Acad. Sci. U.S.A.">
        <title>Genome analysis of multiple pathogenic isolates of Streptococcus agalactiae: implications for the microbial 'pan-genome'.</title>
        <authorList>
            <person name="Tettelin H."/>
            <person name="Masignani V."/>
            <person name="Cieslewicz M.J."/>
            <person name="Donati C."/>
            <person name="Medini D."/>
            <person name="Ward N.L."/>
            <person name="Angiuoli S.V."/>
            <person name="Crabtree J."/>
            <person name="Jones A.L."/>
            <person name="Durkin A.S."/>
            <person name="DeBoy R.T."/>
            <person name="Davidsen T.M."/>
            <person name="Mora M."/>
            <person name="Scarselli M."/>
            <person name="Margarit y Ros I."/>
            <person name="Peterson J.D."/>
            <person name="Hauser C.R."/>
            <person name="Sundaram J.P."/>
            <person name="Nelson W.C."/>
            <person name="Madupu R."/>
            <person name="Brinkac L.M."/>
            <person name="Dodson R.J."/>
            <person name="Rosovitz M.J."/>
            <person name="Sullivan S.A."/>
            <person name="Daugherty S.C."/>
            <person name="Haft D.H."/>
            <person name="Selengut J."/>
            <person name="Gwinn M.L."/>
            <person name="Zhou L."/>
            <person name="Zafar N."/>
            <person name="Khouri H."/>
            <person name="Radune D."/>
            <person name="Dimitrov G."/>
            <person name="Watkins K."/>
            <person name="O'Connor K.J."/>
            <person name="Smith S."/>
            <person name="Utterback T.R."/>
            <person name="White O."/>
            <person name="Rubens C.E."/>
            <person name="Grandi G."/>
            <person name="Madoff L.C."/>
            <person name="Kasper D.L."/>
            <person name="Telford J.L."/>
            <person name="Wessels M.R."/>
            <person name="Rappuoli R."/>
            <person name="Fraser C.M."/>
        </authorList>
    </citation>
    <scope>NUCLEOTIDE SEQUENCE [LARGE SCALE GENOMIC DNA]</scope>
    <source>
        <strain>ATCC 27591 / A909 / CDC SS700</strain>
    </source>
</reference>
<accession>Q3JZC9</accession>
<gene>
    <name evidence="1" type="primary">rpsN</name>
    <name type="synonym">rpsN2</name>
    <name type="synonym">rpsNB</name>
    <name type="ordered locus">SAK_1777</name>
</gene>